<accession>A7X6X6</accession>
<sequence>MTKLITTVKEMQHIVKAAKRSGTTIGFIPTMGALHDGHLTMVRESVSTNDITVVSVFVNPLQFGPNEDFDAYPRQIDKDLELVSEVGADIVFHPAVEDIYPGELGIDVKVGPLADVLEGAKRPGHFDGVVTVVNKLFNIVMPDYAYFGKKDAQQLAIVEQMVKDFNHAVEIIGIDIVREADGLAKSSRNVYLTEQERQEAVHLSKSLLLAQALYQDGERQSKVIIDRVTEYLESHISGRIEEVAVYSYPQLVEQHEITGRIFISLAVKFSKARLIDNIIIGAE</sequence>
<comment type="function">
    <text evidence="1">Catalyzes the condensation of pantoate with beta-alanine in an ATP-dependent reaction via a pantoyl-adenylate intermediate.</text>
</comment>
<comment type="catalytic activity">
    <reaction evidence="1">
        <text>(R)-pantoate + beta-alanine + ATP = (R)-pantothenate + AMP + diphosphate + H(+)</text>
        <dbReference type="Rhea" id="RHEA:10912"/>
        <dbReference type="ChEBI" id="CHEBI:15378"/>
        <dbReference type="ChEBI" id="CHEBI:15980"/>
        <dbReference type="ChEBI" id="CHEBI:29032"/>
        <dbReference type="ChEBI" id="CHEBI:30616"/>
        <dbReference type="ChEBI" id="CHEBI:33019"/>
        <dbReference type="ChEBI" id="CHEBI:57966"/>
        <dbReference type="ChEBI" id="CHEBI:456215"/>
        <dbReference type="EC" id="6.3.2.1"/>
    </reaction>
</comment>
<comment type="pathway">
    <text evidence="1">Cofactor biosynthesis; (R)-pantothenate biosynthesis; (R)-pantothenate from (R)-pantoate and beta-alanine: step 1/1.</text>
</comment>
<comment type="subunit">
    <text evidence="1">Homodimer.</text>
</comment>
<comment type="subcellular location">
    <subcellularLocation>
        <location evidence="1">Cytoplasm</location>
    </subcellularLocation>
</comment>
<comment type="miscellaneous">
    <text evidence="1">The reaction proceeds by a bi uni uni bi ping pong mechanism.</text>
</comment>
<comment type="similarity">
    <text evidence="1">Belongs to the pantothenate synthetase family.</text>
</comment>
<gene>
    <name evidence="1" type="primary">panC</name>
    <name type="ordered locus">SAHV_2582</name>
</gene>
<evidence type="ECO:0000255" key="1">
    <source>
        <dbReference type="HAMAP-Rule" id="MF_00158"/>
    </source>
</evidence>
<keyword id="KW-0067">ATP-binding</keyword>
<keyword id="KW-0963">Cytoplasm</keyword>
<keyword id="KW-0436">Ligase</keyword>
<keyword id="KW-0547">Nucleotide-binding</keyword>
<keyword id="KW-0566">Pantothenate biosynthesis</keyword>
<organism>
    <name type="scientific">Staphylococcus aureus (strain Mu3 / ATCC 700698)</name>
    <dbReference type="NCBI Taxonomy" id="418127"/>
    <lineage>
        <taxon>Bacteria</taxon>
        <taxon>Bacillati</taxon>
        <taxon>Bacillota</taxon>
        <taxon>Bacilli</taxon>
        <taxon>Bacillales</taxon>
        <taxon>Staphylococcaceae</taxon>
        <taxon>Staphylococcus</taxon>
    </lineage>
</organism>
<feature type="chain" id="PRO_1000076867" description="Pantothenate synthetase">
    <location>
        <begin position="1"/>
        <end position="283"/>
    </location>
</feature>
<feature type="active site" description="Proton donor" evidence="1">
    <location>
        <position position="38"/>
    </location>
</feature>
<feature type="binding site" evidence="1">
    <location>
        <begin position="31"/>
        <end position="38"/>
    </location>
    <ligand>
        <name>ATP</name>
        <dbReference type="ChEBI" id="CHEBI:30616"/>
    </ligand>
</feature>
<feature type="binding site" evidence="1">
    <location>
        <position position="62"/>
    </location>
    <ligand>
        <name>(R)-pantoate</name>
        <dbReference type="ChEBI" id="CHEBI:15980"/>
    </ligand>
</feature>
<feature type="binding site" evidence="1">
    <location>
        <position position="62"/>
    </location>
    <ligand>
        <name>beta-alanine</name>
        <dbReference type="ChEBI" id="CHEBI:57966"/>
    </ligand>
</feature>
<feature type="binding site" evidence="1">
    <location>
        <begin position="148"/>
        <end position="151"/>
    </location>
    <ligand>
        <name>ATP</name>
        <dbReference type="ChEBI" id="CHEBI:30616"/>
    </ligand>
</feature>
<feature type="binding site" evidence="1">
    <location>
        <position position="154"/>
    </location>
    <ligand>
        <name>(R)-pantoate</name>
        <dbReference type="ChEBI" id="CHEBI:15980"/>
    </ligand>
</feature>
<feature type="binding site" evidence="1">
    <location>
        <position position="177"/>
    </location>
    <ligand>
        <name>ATP</name>
        <dbReference type="ChEBI" id="CHEBI:30616"/>
    </ligand>
</feature>
<feature type="binding site" evidence="1">
    <location>
        <begin position="185"/>
        <end position="188"/>
    </location>
    <ligand>
        <name>ATP</name>
        <dbReference type="ChEBI" id="CHEBI:30616"/>
    </ligand>
</feature>
<proteinExistence type="inferred from homology"/>
<name>PANC_STAA1</name>
<reference key="1">
    <citation type="journal article" date="2008" name="Antimicrob. Agents Chemother.">
        <title>Mutated response regulator graR is responsible for phenotypic conversion of Staphylococcus aureus from heterogeneous vancomycin-intermediate resistance to vancomycin-intermediate resistance.</title>
        <authorList>
            <person name="Neoh H.-M."/>
            <person name="Cui L."/>
            <person name="Yuzawa H."/>
            <person name="Takeuchi F."/>
            <person name="Matsuo M."/>
            <person name="Hiramatsu K."/>
        </authorList>
    </citation>
    <scope>NUCLEOTIDE SEQUENCE [LARGE SCALE GENOMIC DNA]</scope>
    <source>
        <strain>Mu3 / ATCC 700698</strain>
    </source>
</reference>
<protein>
    <recommendedName>
        <fullName evidence="1">Pantothenate synthetase</fullName>
        <shortName evidence="1">PS</shortName>
        <ecNumber evidence="1">6.3.2.1</ecNumber>
    </recommendedName>
    <alternativeName>
        <fullName evidence="1">Pantoate--beta-alanine ligase</fullName>
    </alternativeName>
    <alternativeName>
        <fullName evidence="1">Pantoate-activating enzyme</fullName>
    </alternativeName>
</protein>
<dbReference type="EC" id="6.3.2.1" evidence="1"/>
<dbReference type="EMBL" id="AP009324">
    <property type="protein sequence ID" value="BAF79465.1"/>
    <property type="molecule type" value="Genomic_DNA"/>
</dbReference>
<dbReference type="RefSeq" id="WP_000163737.1">
    <property type="nucleotide sequence ID" value="NC_009782.1"/>
</dbReference>
<dbReference type="SMR" id="A7X6X6"/>
<dbReference type="KEGG" id="saw:SAHV_2582"/>
<dbReference type="HOGENOM" id="CLU_047148_0_0_9"/>
<dbReference type="UniPathway" id="UPA00028">
    <property type="reaction ID" value="UER00005"/>
</dbReference>
<dbReference type="GO" id="GO:0005829">
    <property type="term" value="C:cytosol"/>
    <property type="evidence" value="ECO:0007669"/>
    <property type="project" value="TreeGrafter"/>
</dbReference>
<dbReference type="GO" id="GO:0005524">
    <property type="term" value="F:ATP binding"/>
    <property type="evidence" value="ECO:0007669"/>
    <property type="project" value="UniProtKB-KW"/>
</dbReference>
<dbReference type="GO" id="GO:0004592">
    <property type="term" value="F:pantoate-beta-alanine ligase activity"/>
    <property type="evidence" value="ECO:0007669"/>
    <property type="project" value="UniProtKB-UniRule"/>
</dbReference>
<dbReference type="GO" id="GO:0015940">
    <property type="term" value="P:pantothenate biosynthetic process"/>
    <property type="evidence" value="ECO:0007669"/>
    <property type="project" value="UniProtKB-UniRule"/>
</dbReference>
<dbReference type="CDD" id="cd00560">
    <property type="entry name" value="PanC"/>
    <property type="match status" value="1"/>
</dbReference>
<dbReference type="FunFam" id="3.30.1300.10:FF:000001">
    <property type="entry name" value="Pantothenate synthetase"/>
    <property type="match status" value="1"/>
</dbReference>
<dbReference type="FunFam" id="3.40.50.620:FF:000013">
    <property type="entry name" value="Pantothenate synthetase"/>
    <property type="match status" value="1"/>
</dbReference>
<dbReference type="Gene3D" id="3.40.50.620">
    <property type="entry name" value="HUPs"/>
    <property type="match status" value="1"/>
</dbReference>
<dbReference type="Gene3D" id="3.30.1300.10">
    <property type="entry name" value="Pantoate-beta-alanine ligase, C-terminal domain"/>
    <property type="match status" value="1"/>
</dbReference>
<dbReference type="HAMAP" id="MF_00158">
    <property type="entry name" value="PanC"/>
    <property type="match status" value="1"/>
</dbReference>
<dbReference type="InterPro" id="IPR003721">
    <property type="entry name" value="Pantoate_ligase"/>
</dbReference>
<dbReference type="InterPro" id="IPR042176">
    <property type="entry name" value="Pantoate_ligase_C"/>
</dbReference>
<dbReference type="InterPro" id="IPR014729">
    <property type="entry name" value="Rossmann-like_a/b/a_fold"/>
</dbReference>
<dbReference type="NCBIfam" id="TIGR00018">
    <property type="entry name" value="panC"/>
    <property type="match status" value="1"/>
</dbReference>
<dbReference type="PANTHER" id="PTHR21299">
    <property type="entry name" value="CYTIDYLATE KINASE/PANTOATE-BETA-ALANINE LIGASE"/>
    <property type="match status" value="1"/>
</dbReference>
<dbReference type="PANTHER" id="PTHR21299:SF1">
    <property type="entry name" value="PANTOATE--BETA-ALANINE LIGASE"/>
    <property type="match status" value="1"/>
</dbReference>
<dbReference type="Pfam" id="PF02569">
    <property type="entry name" value="Pantoate_ligase"/>
    <property type="match status" value="1"/>
</dbReference>
<dbReference type="SUPFAM" id="SSF52374">
    <property type="entry name" value="Nucleotidylyl transferase"/>
    <property type="match status" value="1"/>
</dbReference>